<reference key="1">
    <citation type="submission" date="2007-08" db="EMBL/GenBank/DDBJ databases">
        <title>Complete sequence of Roseiflexus castenholzii DSM 13941.</title>
        <authorList>
            <consortium name="US DOE Joint Genome Institute"/>
            <person name="Copeland A."/>
            <person name="Lucas S."/>
            <person name="Lapidus A."/>
            <person name="Barry K."/>
            <person name="Glavina del Rio T."/>
            <person name="Dalin E."/>
            <person name="Tice H."/>
            <person name="Pitluck S."/>
            <person name="Thompson L.S."/>
            <person name="Brettin T."/>
            <person name="Bruce D."/>
            <person name="Detter J.C."/>
            <person name="Han C."/>
            <person name="Tapia R."/>
            <person name="Schmutz J."/>
            <person name="Larimer F."/>
            <person name="Land M."/>
            <person name="Hauser L."/>
            <person name="Kyrpides N."/>
            <person name="Mikhailova N."/>
            <person name="Bryant D.A."/>
            <person name="Hanada S."/>
            <person name="Tsukatani Y."/>
            <person name="Richardson P."/>
        </authorList>
    </citation>
    <scope>NUCLEOTIDE SEQUENCE [LARGE SCALE GENOMIC DNA]</scope>
    <source>
        <strain>DSM 13941 / HLO8</strain>
    </source>
</reference>
<organism>
    <name type="scientific">Roseiflexus castenholzii (strain DSM 13941 / HLO8)</name>
    <dbReference type="NCBI Taxonomy" id="383372"/>
    <lineage>
        <taxon>Bacteria</taxon>
        <taxon>Bacillati</taxon>
        <taxon>Chloroflexota</taxon>
        <taxon>Chloroflexia</taxon>
        <taxon>Chloroflexales</taxon>
        <taxon>Roseiflexineae</taxon>
        <taxon>Roseiflexaceae</taxon>
        <taxon>Roseiflexus</taxon>
    </lineage>
</organism>
<sequence>MPNRNILYATTLVDELARAGLRHVCLAPGSRNTPLVLAFARHPAIRVFSHLDERSAAFFALGLALATDTPAAVVCTSGSAAANFFPAIVEAHQAGVPLLALTADRPHELRDSGANQTIDQVKMFGSFARWSVDVALPEAMPPPVALRNLRTLAARAMAIAGGEPRGVVHLNLPFRPPLEPTPMPGDLTEPPAAAQPRDDGAPYTCFLRSAPPAPPEAVIEPIAAVLEQHERGLIVCGPRCPGGAFGALVSELSQRTGYPALVDGVSGVRFGYPGVIGGYETFLFGEHAFPPPEVVLRFGAVLTSKWLNQYLDTAASPVVIHVRASGVWADDSHRVSHFVVADEAAFIRALIPRLTERQSAWRQRFVEAEARVWAAVEAGIADEPYFDGGAVYDVIDLLPEGASLFVGNSLPVRHLDQFGKPGVRHICAFANRGASGIDGNISTALGIGAGRPDAPLAAIVGDITFYHDMNGLLAVRRCGVPATIVLLNNDGGGIFHRLPINRFEPEFTDYFVTPHGLDFAHAAKMYGLEYVPVKDRTAFRSAFRASIDARAATLIELRTDARTDLVRRNALIQAARATGA</sequence>
<protein>
    <recommendedName>
        <fullName evidence="1">2-succinyl-5-enolpyruvyl-6-hydroxy-3-cyclohexene-1-carboxylate synthase</fullName>
        <shortName evidence="1">SEPHCHC synthase</shortName>
        <ecNumber evidence="1">2.2.1.9</ecNumber>
    </recommendedName>
    <alternativeName>
        <fullName evidence="1">Menaquinone biosynthesis protein MenD</fullName>
    </alternativeName>
</protein>
<feature type="chain" id="PRO_0000341815" description="2-succinyl-5-enolpyruvyl-6-hydroxy-3-cyclohexene-1-carboxylate synthase">
    <location>
        <begin position="1"/>
        <end position="580"/>
    </location>
</feature>
<feature type="region of interest" description="Disordered" evidence="2">
    <location>
        <begin position="178"/>
        <end position="199"/>
    </location>
</feature>
<proteinExistence type="inferred from homology"/>
<comment type="function">
    <text evidence="1">Catalyzes the thiamine diphosphate-dependent decarboxylation of 2-oxoglutarate and the subsequent addition of the resulting succinic semialdehyde-thiamine pyrophosphate anion to isochorismate to yield 2-succinyl-5-enolpyruvyl-6-hydroxy-3-cyclohexene-1-carboxylate (SEPHCHC).</text>
</comment>
<comment type="catalytic activity">
    <reaction evidence="1">
        <text>isochorismate + 2-oxoglutarate + H(+) = 5-enolpyruvoyl-6-hydroxy-2-succinyl-cyclohex-3-ene-1-carboxylate + CO2</text>
        <dbReference type="Rhea" id="RHEA:25593"/>
        <dbReference type="ChEBI" id="CHEBI:15378"/>
        <dbReference type="ChEBI" id="CHEBI:16526"/>
        <dbReference type="ChEBI" id="CHEBI:16810"/>
        <dbReference type="ChEBI" id="CHEBI:29780"/>
        <dbReference type="ChEBI" id="CHEBI:58818"/>
        <dbReference type="EC" id="2.2.1.9"/>
    </reaction>
</comment>
<comment type="cofactor">
    <cofactor evidence="1">
        <name>Mg(2+)</name>
        <dbReference type="ChEBI" id="CHEBI:18420"/>
    </cofactor>
    <cofactor evidence="1">
        <name>Mn(2+)</name>
        <dbReference type="ChEBI" id="CHEBI:29035"/>
    </cofactor>
</comment>
<comment type="cofactor">
    <cofactor evidence="1">
        <name>thiamine diphosphate</name>
        <dbReference type="ChEBI" id="CHEBI:58937"/>
    </cofactor>
    <text evidence="1">Binds 1 thiamine pyrophosphate per subunit.</text>
</comment>
<comment type="pathway">
    <text evidence="1">Quinol/quinone metabolism; 1,4-dihydroxy-2-naphthoate biosynthesis; 1,4-dihydroxy-2-naphthoate from chorismate: step 2/7.</text>
</comment>
<comment type="pathway">
    <text evidence="1">Quinol/quinone metabolism; menaquinone biosynthesis.</text>
</comment>
<comment type="subunit">
    <text evidence="1">Homodimer.</text>
</comment>
<comment type="similarity">
    <text evidence="1">Belongs to the TPP enzyme family. MenD subfamily.</text>
</comment>
<dbReference type="EC" id="2.2.1.9" evidence="1"/>
<dbReference type="EMBL" id="CP000804">
    <property type="protein sequence ID" value="ABU60244.1"/>
    <property type="molecule type" value="Genomic_DNA"/>
</dbReference>
<dbReference type="RefSeq" id="WP_012122665.1">
    <property type="nucleotide sequence ID" value="NC_009767.1"/>
</dbReference>
<dbReference type="SMR" id="A7NRP8"/>
<dbReference type="STRING" id="383372.Rcas_4217"/>
<dbReference type="KEGG" id="rca:Rcas_4217"/>
<dbReference type="eggNOG" id="COG1165">
    <property type="taxonomic scope" value="Bacteria"/>
</dbReference>
<dbReference type="HOGENOM" id="CLU_006051_3_0_0"/>
<dbReference type="OrthoDB" id="9791859at2"/>
<dbReference type="UniPathway" id="UPA00079"/>
<dbReference type="UniPathway" id="UPA01057">
    <property type="reaction ID" value="UER00164"/>
</dbReference>
<dbReference type="Proteomes" id="UP000000263">
    <property type="component" value="Chromosome"/>
</dbReference>
<dbReference type="GO" id="GO:0070204">
    <property type="term" value="F:2-succinyl-5-enolpyruvyl-6-hydroxy-3-cyclohexene-1-carboxylic-acid synthase activity"/>
    <property type="evidence" value="ECO:0007669"/>
    <property type="project" value="UniProtKB-UniRule"/>
</dbReference>
<dbReference type="GO" id="GO:0000287">
    <property type="term" value="F:magnesium ion binding"/>
    <property type="evidence" value="ECO:0007669"/>
    <property type="project" value="UniProtKB-UniRule"/>
</dbReference>
<dbReference type="GO" id="GO:0030145">
    <property type="term" value="F:manganese ion binding"/>
    <property type="evidence" value="ECO:0007669"/>
    <property type="project" value="UniProtKB-UniRule"/>
</dbReference>
<dbReference type="GO" id="GO:0030976">
    <property type="term" value="F:thiamine pyrophosphate binding"/>
    <property type="evidence" value="ECO:0007669"/>
    <property type="project" value="UniProtKB-UniRule"/>
</dbReference>
<dbReference type="GO" id="GO:0009234">
    <property type="term" value="P:menaquinone biosynthetic process"/>
    <property type="evidence" value="ECO:0007669"/>
    <property type="project" value="UniProtKB-UniRule"/>
</dbReference>
<dbReference type="CDD" id="cd07037">
    <property type="entry name" value="TPP_PYR_MenD"/>
    <property type="match status" value="1"/>
</dbReference>
<dbReference type="CDD" id="cd02009">
    <property type="entry name" value="TPP_SHCHC_synthase"/>
    <property type="match status" value="1"/>
</dbReference>
<dbReference type="Gene3D" id="3.40.50.970">
    <property type="match status" value="2"/>
</dbReference>
<dbReference type="Gene3D" id="3.40.50.1220">
    <property type="entry name" value="TPP-binding domain"/>
    <property type="match status" value="1"/>
</dbReference>
<dbReference type="HAMAP" id="MF_01659">
    <property type="entry name" value="MenD"/>
    <property type="match status" value="1"/>
</dbReference>
<dbReference type="InterPro" id="IPR029035">
    <property type="entry name" value="DHS-like_NAD/FAD-binding_dom"/>
</dbReference>
<dbReference type="InterPro" id="IPR004433">
    <property type="entry name" value="MenaQ_synth_MenD"/>
</dbReference>
<dbReference type="InterPro" id="IPR032264">
    <property type="entry name" value="MenD_middle"/>
</dbReference>
<dbReference type="InterPro" id="IPR029061">
    <property type="entry name" value="THDP-binding"/>
</dbReference>
<dbReference type="InterPro" id="IPR012001">
    <property type="entry name" value="Thiamin_PyroP_enz_TPP-bd_dom"/>
</dbReference>
<dbReference type="InterPro" id="IPR011766">
    <property type="entry name" value="TPP_enzyme_TPP-bd"/>
</dbReference>
<dbReference type="NCBIfam" id="TIGR00173">
    <property type="entry name" value="menD"/>
    <property type="match status" value="1"/>
</dbReference>
<dbReference type="PANTHER" id="PTHR42916">
    <property type="entry name" value="2-SUCCINYL-5-ENOLPYRUVYL-6-HYDROXY-3-CYCLOHEXENE-1-CARBOXYLATE SYNTHASE"/>
    <property type="match status" value="1"/>
</dbReference>
<dbReference type="PANTHER" id="PTHR42916:SF1">
    <property type="entry name" value="PROTEIN PHYLLO, CHLOROPLASTIC"/>
    <property type="match status" value="1"/>
</dbReference>
<dbReference type="Pfam" id="PF02775">
    <property type="entry name" value="TPP_enzyme_C"/>
    <property type="match status" value="1"/>
</dbReference>
<dbReference type="Pfam" id="PF16582">
    <property type="entry name" value="TPP_enzyme_M_2"/>
    <property type="match status" value="1"/>
</dbReference>
<dbReference type="Pfam" id="PF02776">
    <property type="entry name" value="TPP_enzyme_N"/>
    <property type="match status" value="1"/>
</dbReference>
<dbReference type="PIRSF" id="PIRSF004983">
    <property type="entry name" value="MenD"/>
    <property type="match status" value="1"/>
</dbReference>
<dbReference type="SUPFAM" id="SSF52467">
    <property type="entry name" value="DHS-like NAD/FAD-binding domain"/>
    <property type="match status" value="1"/>
</dbReference>
<dbReference type="SUPFAM" id="SSF52518">
    <property type="entry name" value="Thiamin diphosphate-binding fold (THDP-binding)"/>
    <property type="match status" value="2"/>
</dbReference>
<evidence type="ECO:0000255" key="1">
    <source>
        <dbReference type="HAMAP-Rule" id="MF_01659"/>
    </source>
</evidence>
<evidence type="ECO:0000256" key="2">
    <source>
        <dbReference type="SAM" id="MobiDB-lite"/>
    </source>
</evidence>
<accession>A7NRP8</accession>
<gene>
    <name evidence="1" type="primary">menD</name>
    <name type="ordered locus">Rcas_4217</name>
</gene>
<name>MEND_ROSCS</name>
<keyword id="KW-0460">Magnesium</keyword>
<keyword id="KW-0464">Manganese</keyword>
<keyword id="KW-0474">Menaquinone biosynthesis</keyword>
<keyword id="KW-0479">Metal-binding</keyword>
<keyword id="KW-1185">Reference proteome</keyword>
<keyword id="KW-0786">Thiamine pyrophosphate</keyword>
<keyword id="KW-0808">Transferase</keyword>